<dbReference type="EMBL" id="Z97337">
    <property type="protein sequence ID" value="CAB10266.1"/>
    <property type="molecule type" value="Genomic_DNA"/>
</dbReference>
<dbReference type="EMBL" id="AL161540">
    <property type="protein sequence ID" value="CAB78529.1"/>
    <property type="molecule type" value="Genomic_DNA"/>
</dbReference>
<dbReference type="EMBL" id="CP002687">
    <property type="protein sequence ID" value="AEE83511.1"/>
    <property type="molecule type" value="Genomic_DNA"/>
</dbReference>
<dbReference type="EMBL" id="AY045827">
    <property type="protein sequence ID" value="AAK76501.1"/>
    <property type="molecule type" value="mRNA"/>
</dbReference>
<dbReference type="EMBL" id="AY096484">
    <property type="protein sequence ID" value="AAM20124.1"/>
    <property type="molecule type" value="mRNA"/>
</dbReference>
<dbReference type="PIR" id="H71411">
    <property type="entry name" value="H71411"/>
</dbReference>
<dbReference type="RefSeq" id="NP_567446.1">
    <property type="nucleotide sequence ID" value="NM_117573.2"/>
</dbReference>
<dbReference type="FunCoup" id="O23342">
    <property type="interactions" value="719"/>
</dbReference>
<dbReference type="IntAct" id="O23342">
    <property type="interactions" value="2"/>
</dbReference>
<dbReference type="STRING" id="3702.O23342"/>
<dbReference type="TCDB" id="3.A.5.4.2">
    <property type="family name" value="the general secretory pathway (sec) family"/>
</dbReference>
<dbReference type="GlyGen" id="O23342">
    <property type="glycosylation" value="1 site"/>
</dbReference>
<dbReference type="iPTMnet" id="O23342"/>
<dbReference type="PaxDb" id="3702-AT4G14870.1"/>
<dbReference type="ProteomicsDB" id="232926"/>
<dbReference type="EnsemblPlants" id="AT4G14870.1">
    <property type="protein sequence ID" value="AT4G14870.1"/>
    <property type="gene ID" value="AT4G14870"/>
</dbReference>
<dbReference type="GeneID" id="827144"/>
<dbReference type="Gramene" id="AT4G14870.1">
    <property type="protein sequence ID" value="AT4G14870.1"/>
    <property type="gene ID" value="AT4G14870"/>
</dbReference>
<dbReference type="KEGG" id="ath:AT4G14870"/>
<dbReference type="Araport" id="AT4G14870"/>
<dbReference type="TAIR" id="AT4G14870">
    <property type="gene designation" value="SECE1"/>
</dbReference>
<dbReference type="eggNOG" id="ENOG502S47G">
    <property type="taxonomic scope" value="Eukaryota"/>
</dbReference>
<dbReference type="HOGENOM" id="CLU_132876_0_0_1"/>
<dbReference type="InParanoid" id="O23342"/>
<dbReference type="OMA" id="QKEPDFW"/>
<dbReference type="PhylomeDB" id="O23342"/>
<dbReference type="PRO" id="PR:O23342"/>
<dbReference type="Proteomes" id="UP000006548">
    <property type="component" value="Chromosome 4"/>
</dbReference>
<dbReference type="ExpressionAtlas" id="O23342">
    <property type="expression patterns" value="baseline and differential"/>
</dbReference>
<dbReference type="GO" id="GO:0009535">
    <property type="term" value="C:chloroplast thylakoid membrane"/>
    <property type="evidence" value="ECO:0007005"/>
    <property type="project" value="TAIR"/>
</dbReference>
<dbReference type="GO" id="GO:0008320">
    <property type="term" value="F:protein transmembrane transporter activity"/>
    <property type="evidence" value="ECO:0007669"/>
    <property type="project" value="InterPro"/>
</dbReference>
<dbReference type="GO" id="GO:0006886">
    <property type="term" value="P:intracellular protein transport"/>
    <property type="evidence" value="ECO:0007669"/>
    <property type="project" value="InterPro"/>
</dbReference>
<dbReference type="GO" id="GO:0009306">
    <property type="term" value="P:protein secretion"/>
    <property type="evidence" value="ECO:0007669"/>
    <property type="project" value="InterPro"/>
</dbReference>
<dbReference type="GO" id="GO:0006605">
    <property type="term" value="P:protein targeting"/>
    <property type="evidence" value="ECO:0007669"/>
    <property type="project" value="InterPro"/>
</dbReference>
<dbReference type="FunFam" id="1.20.5.1030:FF:000005">
    <property type="entry name" value="preprotein translocase subunit SECE1"/>
    <property type="match status" value="1"/>
</dbReference>
<dbReference type="Gene3D" id="1.20.5.1030">
    <property type="entry name" value="Preprotein translocase secy subunit"/>
    <property type="match status" value="1"/>
</dbReference>
<dbReference type="HAMAP" id="MF_00422">
    <property type="entry name" value="SecE"/>
    <property type="match status" value="1"/>
</dbReference>
<dbReference type="InterPro" id="IPR055330">
    <property type="entry name" value="SECE1-like"/>
</dbReference>
<dbReference type="InterPro" id="IPR005807">
    <property type="entry name" value="SecE_bac"/>
</dbReference>
<dbReference type="InterPro" id="IPR038379">
    <property type="entry name" value="SecE_sf"/>
</dbReference>
<dbReference type="InterPro" id="IPR001901">
    <property type="entry name" value="Translocase_SecE/Sec61-g"/>
</dbReference>
<dbReference type="NCBIfam" id="TIGR00964">
    <property type="entry name" value="secE_bact"/>
    <property type="match status" value="1"/>
</dbReference>
<dbReference type="PANTHER" id="PTHR37240">
    <property type="entry name" value="PREPROTEIN TRANSLOCASE SUBUNIT SECE1"/>
    <property type="match status" value="1"/>
</dbReference>
<dbReference type="PANTHER" id="PTHR37240:SF1">
    <property type="entry name" value="PREPROTEIN TRANSLOCASE SUBUNIT SECE1"/>
    <property type="match status" value="1"/>
</dbReference>
<dbReference type="Pfam" id="PF00584">
    <property type="entry name" value="SecE"/>
    <property type="match status" value="1"/>
</dbReference>
<reference key="1">
    <citation type="journal article" date="1998" name="Nature">
        <title>Analysis of 1.9 Mb of contiguous sequence from chromosome 4 of Arabidopsis thaliana.</title>
        <authorList>
            <person name="Bevan M."/>
            <person name="Bancroft I."/>
            <person name="Bent E."/>
            <person name="Love K."/>
            <person name="Goodman H.M."/>
            <person name="Dean C."/>
            <person name="Bergkamp R."/>
            <person name="Dirkse W."/>
            <person name="van Staveren M."/>
            <person name="Stiekema W."/>
            <person name="Drost L."/>
            <person name="Ridley P."/>
            <person name="Hudson S.-A."/>
            <person name="Patel K."/>
            <person name="Murphy G."/>
            <person name="Piffanelli P."/>
            <person name="Wedler H."/>
            <person name="Wedler E."/>
            <person name="Wambutt R."/>
            <person name="Weitzenegger T."/>
            <person name="Pohl T."/>
            <person name="Terryn N."/>
            <person name="Gielen J."/>
            <person name="Villarroel R."/>
            <person name="De Clercq R."/>
            <person name="van Montagu M."/>
            <person name="Lecharny A."/>
            <person name="Aubourg S."/>
            <person name="Gy I."/>
            <person name="Kreis M."/>
            <person name="Lao N."/>
            <person name="Kavanagh T."/>
            <person name="Hempel S."/>
            <person name="Kotter P."/>
            <person name="Entian K.-D."/>
            <person name="Rieger M."/>
            <person name="Schaefer M."/>
            <person name="Funk B."/>
            <person name="Mueller-Auer S."/>
            <person name="Silvey M."/>
            <person name="James R."/>
            <person name="Monfort A."/>
            <person name="Pons A."/>
            <person name="Puigdomenech P."/>
            <person name="Douka A."/>
            <person name="Voukelatou E."/>
            <person name="Milioni D."/>
            <person name="Hatzopoulos P."/>
            <person name="Piravandi E."/>
            <person name="Obermaier B."/>
            <person name="Hilbert H."/>
            <person name="Duesterhoeft A."/>
            <person name="Moores T."/>
            <person name="Jones J.D.G."/>
            <person name="Eneva T."/>
            <person name="Palme K."/>
            <person name="Benes V."/>
            <person name="Rechmann S."/>
            <person name="Ansorge W."/>
            <person name="Cooke R."/>
            <person name="Berger C."/>
            <person name="Delseny M."/>
            <person name="Voet M."/>
            <person name="Volckaert G."/>
            <person name="Mewes H.-W."/>
            <person name="Klosterman S."/>
            <person name="Schueller C."/>
            <person name="Chalwatzis N."/>
        </authorList>
    </citation>
    <scope>NUCLEOTIDE SEQUENCE [LARGE SCALE GENOMIC DNA]</scope>
    <source>
        <strain>cv. Columbia</strain>
    </source>
</reference>
<reference key="2">
    <citation type="journal article" date="1999" name="Nature">
        <title>Sequence and analysis of chromosome 4 of the plant Arabidopsis thaliana.</title>
        <authorList>
            <person name="Mayer K.F.X."/>
            <person name="Schueller C."/>
            <person name="Wambutt R."/>
            <person name="Murphy G."/>
            <person name="Volckaert G."/>
            <person name="Pohl T."/>
            <person name="Duesterhoeft A."/>
            <person name="Stiekema W."/>
            <person name="Entian K.-D."/>
            <person name="Terryn N."/>
            <person name="Harris B."/>
            <person name="Ansorge W."/>
            <person name="Brandt P."/>
            <person name="Grivell L.A."/>
            <person name="Rieger M."/>
            <person name="Weichselgartner M."/>
            <person name="de Simone V."/>
            <person name="Obermaier B."/>
            <person name="Mache R."/>
            <person name="Mueller M."/>
            <person name="Kreis M."/>
            <person name="Delseny M."/>
            <person name="Puigdomenech P."/>
            <person name="Watson M."/>
            <person name="Schmidtheini T."/>
            <person name="Reichert B."/>
            <person name="Portetelle D."/>
            <person name="Perez-Alonso M."/>
            <person name="Boutry M."/>
            <person name="Bancroft I."/>
            <person name="Vos P."/>
            <person name="Hoheisel J."/>
            <person name="Zimmermann W."/>
            <person name="Wedler H."/>
            <person name="Ridley P."/>
            <person name="Langham S.-A."/>
            <person name="McCullagh B."/>
            <person name="Bilham L."/>
            <person name="Robben J."/>
            <person name="van der Schueren J."/>
            <person name="Grymonprez B."/>
            <person name="Chuang Y.-J."/>
            <person name="Vandenbussche F."/>
            <person name="Braeken M."/>
            <person name="Weltjens I."/>
            <person name="Voet M."/>
            <person name="Bastiaens I."/>
            <person name="Aert R."/>
            <person name="Defoor E."/>
            <person name="Weitzenegger T."/>
            <person name="Bothe G."/>
            <person name="Ramsperger U."/>
            <person name="Hilbert H."/>
            <person name="Braun M."/>
            <person name="Holzer E."/>
            <person name="Brandt A."/>
            <person name="Peters S."/>
            <person name="van Staveren M."/>
            <person name="Dirkse W."/>
            <person name="Mooijman P."/>
            <person name="Klein Lankhorst R."/>
            <person name="Rose M."/>
            <person name="Hauf J."/>
            <person name="Koetter P."/>
            <person name="Berneiser S."/>
            <person name="Hempel S."/>
            <person name="Feldpausch M."/>
            <person name="Lamberth S."/>
            <person name="Van den Daele H."/>
            <person name="De Keyser A."/>
            <person name="Buysshaert C."/>
            <person name="Gielen J."/>
            <person name="Villarroel R."/>
            <person name="De Clercq R."/>
            <person name="van Montagu M."/>
            <person name="Rogers J."/>
            <person name="Cronin A."/>
            <person name="Quail M.A."/>
            <person name="Bray-Allen S."/>
            <person name="Clark L."/>
            <person name="Doggett J."/>
            <person name="Hall S."/>
            <person name="Kay M."/>
            <person name="Lennard N."/>
            <person name="McLay K."/>
            <person name="Mayes R."/>
            <person name="Pettett A."/>
            <person name="Rajandream M.A."/>
            <person name="Lyne M."/>
            <person name="Benes V."/>
            <person name="Rechmann S."/>
            <person name="Borkova D."/>
            <person name="Bloecker H."/>
            <person name="Scharfe M."/>
            <person name="Grimm M."/>
            <person name="Loehnert T.-H."/>
            <person name="Dose S."/>
            <person name="de Haan M."/>
            <person name="Maarse A.C."/>
            <person name="Schaefer M."/>
            <person name="Mueller-Auer S."/>
            <person name="Gabel C."/>
            <person name="Fuchs M."/>
            <person name="Fartmann B."/>
            <person name="Granderath K."/>
            <person name="Dauner D."/>
            <person name="Herzl A."/>
            <person name="Neumann S."/>
            <person name="Argiriou A."/>
            <person name="Vitale D."/>
            <person name="Liguori R."/>
            <person name="Piravandi E."/>
            <person name="Massenet O."/>
            <person name="Quigley F."/>
            <person name="Clabauld G."/>
            <person name="Muendlein A."/>
            <person name="Felber R."/>
            <person name="Schnabl S."/>
            <person name="Hiller R."/>
            <person name="Schmidt W."/>
            <person name="Lecharny A."/>
            <person name="Aubourg S."/>
            <person name="Chefdor F."/>
            <person name="Cooke R."/>
            <person name="Berger C."/>
            <person name="Monfort A."/>
            <person name="Casacuberta E."/>
            <person name="Gibbons T."/>
            <person name="Weber N."/>
            <person name="Vandenbol M."/>
            <person name="Bargues M."/>
            <person name="Terol J."/>
            <person name="Torres A."/>
            <person name="Perez-Perez A."/>
            <person name="Purnelle B."/>
            <person name="Bent E."/>
            <person name="Johnson S."/>
            <person name="Tacon D."/>
            <person name="Jesse T."/>
            <person name="Heijnen L."/>
            <person name="Schwarz S."/>
            <person name="Scholler P."/>
            <person name="Heber S."/>
            <person name="Francs P."/>
            <person name="Bielke C."/>
            <person name="Frishman D."/>
            <person name="Haase D."/>
            <person name="Lemcke K."/>
            <person name="Mewes H.-W."/>
            <person name="Stocker S."/>
            <person name="Zaccaria P."/>
            <person name="Bevan M."/>
            <person name="Wilson R.K."/>
            <person name="de la Bastide M."/>
            <person name="Habermann K."/>
            <person name="Parnell L."/>
            <person name="Dedhia N."/>
            <person name="Gnoj L."/>
            <person name="Schutz K."/>
            <person name="Huang E."/>
            <person name="Spiegel L."/>
            <person name="Sekhon M."/>
            <person name="Murray J."/>
            <person name="Sheet P."/>
            <person name="Cordes M."/>
            <person name="Abu-Threideh J."/>
            <person name="Stoneking T."/>
            <person name="Kalicki J."/>
            <person name="Graves T."/>
            <person name="Harmon G."/>
            <person name="Edwards J."/>
            <person name="Latreille P."/>
            <person name="Courtney L."/>
            <person name="Cloud J."/>
            <person name="Abbott A."/>
            <person name="Scott K."/>
            <person name="Johnson D."/>
            <person name="Minx P."/>
            <person name="Bentley D."/>
            <person name="Fulton B."/>
            <person name="Miller N."/>
            <person name="Greco T."/>
            <person name="Kemp K."/>
            <person name="Kramer J."/>
            <person name="Fulton L."/>
            <person name="Mardis E."/>
            <person name="Dante M."/>
            <person name="Pepin K."/>
            <person name="Hillier L.W."/>
            <person name="Nelson J."/>
            <person name="Spieth J."/>
            <person name="Ryan E."/>
            <person name="Andrews S."/>
            <person name="Geisel C."/>
            <person name="Layman D."/>
            <person name="Du H."/>
            <person name="Ali J."/>
            <person name="Berghoff A."/>
            <person name="Jones K."/>
            <person name="Drone K."/>
            <person name="Cotton M."/>
            <person name="Joshu C."/>
            <person name="Antonoiu B."/>
            <person name="Zidanic M."/>
            <person name="Strong C."/>
            <person name="Sun H."/>
            <person name="Lamar B."/>
            <person name="Yordan C."/>
            <person name="Ma P."/>
            <person name="Zhong J."/>
            <person name="Preston R."/>
            <person name="Vil D."/>
            <person name="Shekher M."/>
            <person name="Matero A."/>
            <person name="Shah R."/>
            <person name="Swaby I.K."/>
            <person name="O'Shaughnessy A."/>
            <person name="Rodriguez M."/>
            <person name="Hoffman J."/>
            <person name="Till S."/>
            <person name="Granat S."/>
            <person name="Shohdy N."/>
            <person name="Hasegawa A."/>
            <person name="Hameed A."/>
            <person name="Lodhi M."/>
            <person name="Johnson A."/>
            <person name="Chen E."/>
            <person name="Marra M.A."/>
            <person name="Martienssen R."/>
            <person name="McCombie W.R."/>
        </authorList>
    </citation>
    <scope>NUCLEOTIDE SEQUENCE [LARGE SCALE GENOMIC DNA]</scope>
    <source>
        <strain>cv. Columbia</strain>
    </source>
</reference>
<reference key="3">
    <citation type="journal article" date="2017" name="Plant J.">
        <title>Araport11: a complete reannotation of the Arabidopsis thaliana reference genome.</title>
        <authorList>
            <person name="Cheng C.Y."/>
            <person name="Krishnakumar V."/>
            <person name="Chan A.P."/>
            <person name="Thibaud-Nissen F."/>
            <person name="Schobel S."/>
            <person name="Town C.D."/>
        </authorList>
    </citation>
    <scope>GENOME REANNOTATION</scope>
    <source>
        <strain>cv. Columbia</strain>
    </source>
</reference>
<reference key="4">
    <citation type="journal article" date="2003" name="Science">
        <title>Empirical analysis of transcriptional activity in the Arabidopsis genome.</title>
        <authorList>
            <person name="Yamada K."/>
            <person name="Lim J."/>
            <person name="Dale J.M."/>
            <person name="Chen H."/>
            <person name="Shinn P."/>
            <person name="Palm C.J."/>
            <person name="Southwick A.M."/>
            <person name="Wu H.C."/>
            <person name="Kim C.J."/>
            <person name="Nguyen M."/>
            <person name="Pham P.K."/>
            <person name="Cheuk R.F."/>
            <person name="Karlin-Newmann G."/>
            <person name="Liu S.X."/>
            <person name="Lam B."/>
            <person name="Sakano H."/>
            <person name="Wu T."/>
            <person name="Yu G."/>
            <person name="Miranda M."/>
            <person name="Quach H.L."/>
            <person name="Tripp M."/>
            <person name="Chang C.H."/>
            <person name="Lee J.M."/>
            <person name="Toriumi M.J."/>
            <person name="Chan M.M."/>
            <person name="Tang C.C."/>
            <person name="Onodera C.S."/>
            <person name="Deng J.M."/>
            <person name="Akiyama K."/>
            <person name="Ansari Y."/>
            <person name="Arakawa T."/>
            <person name="Banh J."/>
            <person name="Banno F."/>
            <person name="Bowser L."/>
            <person name="Brooks S.Y."/>
            <person name="Carninci P."/>
            <person name="Chao Q."/>
            <person name="Choy N."/>
            <person name="Enju A."/>
            <person name="Goldsmith A.D."/>
            <person name="Gurjal M."/>
            <person name="Hansen N.F."/>
            <person name="Hayashizaki Y."/>
            <person name="Johnson-Hopson C."/>
            <person name="Hsuan V.W."/>
            <person name="Iida K."/>
            <person name="Karnes M."/>
            <person name="Khan S."/>
            <person name="Koesema E."/>
            <person name="Ishida J."/>
            <person name="Jiang P.X."/>
            <person name="Jones T."/>
            <person name="Kawai J."/>
            <person name="Kamiya A."/>
            <person name="Meyers C."/>
            <person name="Nakajima M."/>
            <person name="Narusaka M."/>
            <person name="Seki M."/>
            <person name="Sakurai T."/>
            <person name="Satou M."/>
            <person name="Tamse R."/>
            <person name="Vaysberg M."/>
            <person name="Wallender E.K."/>
            <person name="Wong C."/>
            <person name="Yamamura Y."/>
            <person name="Yuan S."/>
            <person name="Shinozaki K."/>
            <person name="Davis R.W."/>
            <person name="Theologis A."/>
            <person name="Ecker J.R."/>
        </authorList>
    </citation>
    <scope>NUCLEOTIDE SEQUENCE [LARGE SCALE MRNA]</scope>
    <source>
        <strain>cv. Columbia</strain>
    </source>
</reference>
<reference key="5">
    <citation type="journal article" date="1999" name="J. Biol. Chem.">
        <title>Chloroplast SecY is complexed to SecE and involved in the translocation of the 33-kDa but not the 23-kDa subunit of the oxygen-evolving complex.</title>
        <authorList>
            <person name="Schuenemann D."/>
            <person name="Amin P."/>
            <person name="Hartmann E."/>
            <person name="Hoffman N.E."/>
        </authorList>
    </citation>
    <scope>SUBCELLULAR LOCATION</scope>
    <scope>INTERACTION WITH SCY1</scope>
</reference>
<reference key="6">
    <citation type="journal article" date="2001" name="FEBS Lett.">
        <title>Complementation of bacterial SecE by a chloroplastic homologue.</title>
        <authorList>
            <person name="Froderberg L."/>
            <person name="Rohl T."/>
            <person name="van Wijk K.J."/>
            <person name="de Gier J.W."/>
        </authorList>
    </citation>
    <scope>FUNCTION</scope>
</reference>
<reference key="7">
    <citation type="journal article" date="2002" name="Biochem. Biophys. Res. Commun.">
        <title>Chloroplast SecE: evidence for spontaneous insertion into the thylakoid membrane.</title>
        <authorList>
            <person name="Steiner J.M."/>
            <person name="Kocher T."/>
            <person name="Nagy C."/>
            <person name="Loffelhardt W."/>
        </authorList>
    </citation>
    <scope>SUBCELLULAR LOCATION</scope>
</reference>
<reference key="8">
    <citation type="journal article" date="2005" name="Appl. Microbiol. Biotechnol.">
        <title>The yeast split-ubiquitin system to study chloroplast membrane protein interactions.</title>
        <authorList>
            <person name="Pasch J.C."/>
            <person name="Nickelsen J."/>
            <person name="Schunemann D."/>
        </authorList>
    </citation>
    <scope>INTERACTION WITH SCY1 AND ALB3</scope>
</reference>
<reference key="9">
    <citation type="journal article" date="2009" name="Plant Physiol.">
        <title>Large-scale Arabidopsis phosphoproteome profiling reveals novel chloroplast kinase substrates and phosphorylation networks.</title>
        <authorList>
            <person name="Reiland S."/>
            <person name="Messerli G."/>
            <person name="Baerenfaller K."/>
            <person name="Gerrits B."/>
            <person name="Endler A."/>
            <person name="Grossmann J."/>
            <person name="Gruissem W."/>
            <person name="Baginsky S."/>
        </authorList>
    </citation>
    <scope>IDENTIFICATION BY MASS SPECTROMETRY [LARGE SCALE ANALYSIS]</scope>
</reference>
<reference key="10">
    <citation type="journal article" date="2011" name="Plant Physiol.">
        <title>Plastids contain a second sec translocase system with essential functions.</title>
        <authorList>
            <person name="Skalitzky C.A."/>
            <person name="Martin J.R."/>
            <person name="Harwood J.H."/>
            <person name="Beirne J.J."/>
            <person name="Adamczyk B.J."/>
            <person name="Heck G.R."/>
            <person name="Cline K."/>
            <person name="Fernandez D.E."/>
        </authorList>
    </citation>
    <scope>FUNCTION</scope>
    <scope>DISRUPTION PHENOTYPE</scope>
</reference>
<protein>
    <recommendedName>
        <fullName>Preprotein translocase subunit SECE1</fullName>
    </recommendedName>
</protein>
<proteinExistence type="evidence at protein level"/>
<sequence>MSLTAQFSPPVTGITRSLRDTKPSLSNLRVFPVYTEIRTMTTSNLRKSACFVAKAIEQRRDTAGSESESEATPSPAEESGSGEDKEVEISAIGAEIKAAMEQRKTAEEEKGKNEFLSGVAEEVKEIEWPAFQKVLGTTGVVLGVIAGSSVVLLTVNFLLAELSDRVFIGRGVQDFFS</sequence>
<keyword id="KW-0150">Chloroplast</keyword>
<keyword id="KW-0472">Membrane</keyword>
<keyword id="KW-0934">Plastid</keyword>
<keyword id="KW-0653">Protein transport</keyword>
<keyword id="KW-1185">Reference proteome</keyword>
<keyword id="KW-0793">Thylakoid</keyword>
<keyword id="KW-0809">Transit peptide</keyword>
<keyword id="KW-0811">Translocation</keyword>
<keyword id="KW-0812">Transmembrane</keyword>
<keyword id="KW-1133">Transmembrane helix</keyword>
<keyword id="KW-0813">Transport</keyword>
<name>SECE1_ARATH</name>
<gene>
    <name type="primary">SECE1</name>
    <name type="ordered locus">At4g14870</name>
    <name type="ORF">dl3475w</name>
    <name type="ORF">FCAALL.408</name>
</gene>
<feature type="transit peptide" description="Chloroplast" evidence="1">
    <location>
        <begin position="1"/>
        <end position="38"/>
    </location>
</feature>
<feature type="chain" id="PRO_0000414226" description="Preprotein translocase subunit SECE1">
    <location>
        <begin position="39"/>
        <end position="177"/>
    </location>
</feature>
<feature type="transmembrane region" description="Helical" evidence="1">
    <location>
        <begin position="140"/>
        <end position="160"/>
    </location>
</feature>
<feature type="region of interest" description="Disordered" evidence="2">
    <location>
        <begin position="60"/>
        <end position="87"/>
    </location>
</feature>
<feature type="compositionally biased region" description="Low complexity" evidence="2">
    <location>
        <begin position="64"/>
        <end position="79"/>
    </location>
</feature>
<comment type="function">
    <text evidence="4 7">Involved in the import/insertion pathway in the thylakoids. The signal recognition particle is not involved in the insertion of SECE1 in the thylakoid membrane.</text>
</comment>
<comment type="subunit">
    <text evidence="3 6">Part of the Sec protein translocation apparatus. Interacts with SCY1 and ALB3.</text>
</comment>
<comment type="interaction">
    <interactant intactId="EBI-1806811">
        <id>O23342</id>
    </interactant>
    <interactant intactId="EBI-1806802">
        <id>Q38885</id>
        <label>SCY1</label>
    </interactant>
    <organismsDiffer>false</organismsDiffer>
    <experiments>3</experiments>
</comment>
<comment type="subcellular location">
    <subcellularLocation>
        <location evidence="3 5">Plastid</location>
        <location evidence="3 5">Chloroplast thylakoid membrane</location>
        <topology evidence="3 5">Single-pass membrane protein</topology>
    </subcellularLocation>
</comment>
<comment type="disruption phenotype">
    <text evidence="7">Seedling lethal. Albino seedlings with yellow and translucent (glassy) lateral organs when grown heterotrophically.</text>
</comment>
<comment type="similarity">
    <text evidence="8">Belongs to the SecE/SEC61-gamma family.</text>
</comment>
<accession>O23342</accession>
<evidence type="ECO:0000255" key="1"/>
<evidence type="ECO:0000256" key="2">
    <source>
        <dbReference type="SAM" id="MobiDB-lite"/>
    </source>
</evidence>
<evidence type="ECO:0000269" key="3">
    <source>
    </source>
</evidence>
<evidence type="ECO:0000269" key="4">
    <source>
    </source>
</evidence>
<evidence type="ECO:0000269" key="5">
    <source>
    </source>
</evidence>
<evidence type="ECO:0000269" key="6">
    <source>
    </source>
</evidence>
<evidence type="ECO:0000269" key="7">
    <source>
    </source>
</evidence>
<evidence type="ECO:0000305" key="8"/>
<organism>
    <name type="scientific">Arabidopsis thaliana</name>
    <name type="common">Mouse-ear cress</name>
    <dbReference type="NCBI Taxonomy" id="3702"/>
    <lineage>
        <taxon>Eukaryota</taxon>
        <taxon>Viridiplantae</taxon>
        <taxon>Streptophyta</taxon>
        <taxon>Embryophyta</taxon>
        <taxon>Tracheophyta</taxon>
        <taxon>Spermatophyta</taxon>
        <taxon>Magnoliopsida</taxon>
        <taxon>eudicotyledons</taxon>
        <taxon>Gunneridae</taxon>
        <taxon>Pentapetalae</taxon>
        <taxon>rosids</taxon>
        <taxon>malvids</taxon>
        <taxon>Brassicales</taxon>
        <taxon>Brassicaceae</taxon>
        <taxon>Camelineae</taxon>
        <taxon>Arabidopsis</taxon>
    </lineage>
</organism>